<reference key="1">
    <citation type="journal article" date="2003" name="Mol. Microbiol.">
        <title>Genome-based analysis of virulence genes in a non-biofilm-forming Staphylococcus epidermidis strain (ATCC 12228).</title>
        <authorList>
            <person name="Zhang Y.-Q."/>
            <person name="Ren S.-X."/>
            <person name="Li H.-L."/>
            <person name="Wang Y.-X."/>
            <person name="Fu G."/>
            <person name="Yang J."/>
            <person name="Qin Z.-Q."/>
            <person name="Miao Y.-G."/>
            <person name="Wang W.-Y."/>
            <person name="Chen R.-S."/>
            <person name="Shen Y."/>
            <person name="Chen Z."/>
            <person name="Yuan Z.-H."/>
            <person name="Zhao G.-P."/>
            <person name="Qu D."/>
            <person name="Danchin A."/>
            <person name="Wen Y.-M."/>
        </authorList>
    </citation>
    <scope>NUCLEOTIDE SEQUENCE [LARGE SCALE GENOMIC DNA]</scope>
    <source>
        <strain>ATCC 12228 / FDA PCI 1200</strain>
    </source>
</reference>
<dbReference type="EC" id="1.8.4.12" evidence="1"/>
<dbReference type="EMBL" id="AE015929">
    <property type="protein sequence ID" value="AAO04713.1"/>
    <property type="molecule type" value="Genomic_DNA"/>
</dbReference>
<dbReference type="RefSeq" id="NP_764671.1">
    <property type="nucleotide sequence ID" value="NC_004461.1"/>
</dbReference>
<dbReference type="RefSeq" id="WP_002439748.1">
    <property type="nucleotide sequence ID" value="NZ_WBME01000002.1"/>
</dbReference>
<dbReference type="SMR" id="Q8CSK6"/>
<dbReference type="GeneID" id="50018761"/>
<dbReference type="KEGG" id="sep:SE_1116"/>
<dbReference type="PATRIC" id="fig|176280.10.peg.1089"/>
<dbReference type="eggNOG" id="COG0229">
    <property type="taxonomic scope" value="Bacteria"/>
</dbReference>
<dbReference type="HOGENOM" id="CLU_031040_8_5_9"/>
<dbReference type="OrthoDB" id="4174719at2"/>
<dbReference type="Proteomes" id="UP000001411">
    <property type="component" value="Chromosome"/>
</dbReference>
<dbReference type="GO" id="GO:0005737">
    <property type="term" value="C:cytoplasm"/>
    <property type="evidence" value="ECO:0007669"/>
    <property type="project" value="TreeGrafter"/>
</dbReference>
<dbReference type="GO" id="GO:0033743">
    <property type="term" value="F:peptide-methionine (R)-S-oxide reductase activity"/>
    <property type="evidence" value="ECO:0007669"/>
    <property type="project" value="UniProtKB-UniRule"/>
</dbReference>
<dbReference type="GO" id="GO:0030091">
    <property type="term" value="P:protein repair"/>
    <property type="evidence" value="ECO:0007669"/>
    <property type="project" value="InterPro"/>
</dbReference>
<dbReference type="GO" id="GO:0006979">
    <property type="term" value="P:response to oxidative stress"/>
    <property type="evidence" value="ECO:0007669"/>
    <property type="project" value="InterPro"/>
</dbReference>
<dbReference type="FunFam" id="2.170.150.20:FF:000003">
    <property type="entry name" value="Peptide methionine sulfoxide reductase MsrB"/>
    <property type="match status" value="1"/>
</dbReference>
<dbReference type="Gene3D" id="2.170.150.20">
    <property type="entry name" value="Peptide methionine sulfoxide reductase"/>
    <property type="match status" value="1"/>
</dbReference>
<dbReference type="HAMAP" id="MF_01400">
    <property type="entry name" value="MsrB"/>
    <property type="match status" value="1"/>
</dbReference>
<dbReference type="InterPro" id="IPR028427">
    <property type="entry name" value="Met_Sox_Rdtase_MsrB"/>
</dbReference>
<dbReference type="InterPro" id="IPR002579">
    <property type="entry name" value="Met_Sox_Rdtase_MsrB_dom"/>
</dbReference>
<dbReference type="InterPro" id="IPR011057">
    <property type="entry name" value="Mss4-like_sf"/>
</dbReference>
<dbReference type="NCBIfam" id="TIGR00357">
    <property type="entry name" value="peptide-methionine (R)-S-oxide reductase MsrB"/>
    <property type="match status" value="1"/>
</dbReference>
<dbReference type="PANTHER" id="PTHR10173">
    <property type="entry name" value="METHIONINE SULFOXIDE REDUCTASE"/>
    <property type="match status" value="1"/>
</dbReference>
<dbReference type="PANTHER" id="PTHR10173:SF59">
    <property type="entry name" value="PEPTIDE METHIONINE SULFOXIDE REDUCTASE MSRA_MSRB"/>
    <property type="match status" value="1"/>
</dbReference>
<dbReference type="Pfam" id="PF01641">
    <property type="entry name" value="SelR"/>
    <property type="match status" value="1"/>
</dbReference>
<dbReference type="SUPFAM" id="SSF51316">
    <property type="entry name" value="Mss4-like"/>
    <property type="match status" value="1"/>
</dbReference>
<dbReference type="PROSITE" id="PS51790">
    <property type="entry name" value="MSRB"/>
    <property type="match status" value="1"/>
</dbReference>
<proteinExistence type="inferred from homology"/>
<feature type="chain" id="PRO_0000140301" description="Peptide methionine sulfoxide reductase MsrB">
    <location>
        <begin position="1"/>
        <end position="142"/>
    </location>
</feature>
<feature type="domain" description="MsrB" evidence="2">
    <location>
        <begin position="2"/>
        <end position="125"/>
    </location>
</feature>
<feature type="active site" description="Nucleophile" evidence="2">
    <location>
        <position position="114"/>
    </location>
</feature>
<accession>Q8CSK6</accession>
<protein>
    <recommendedName>
        <fullName evidence="1">Peptide methionine sulfoxide reductase MsrB</fullName>
        <ecNumber evidence="1">1.8.4.12</ecNumber>
    </recommendedName>
    <alternativeName>
        <fullName evidence="1">Peptide-methionine (R)-S-oxide reductase</fullName>
    </alternativeName>
</protein>
<gene>
    <name evidence="1" type="primary">msrB</name>
    <name type="ordered locus">SE_1116</name>
</gene>
<evidence type="ECO:0000255" key="1">
    <source>
        <dbReference type="HAMAP-Rule" id="MF_01400"/>
    </source>
</evidence>
<evidence type="ECO:0000255" key="2">
    <source>
        <dbReference type="PROSITE-ProRule" id="PRU01126"/>
    </source>
</evidence>
<organism>
    <name type="scientific">Staphylococcus epidermidis (strain ATCC 12228 / FDA PCI 1200)</name>
    <dbReference type="NCBI Taxonomy" id="176280"/>
    <lineage>
        <taxon>Bacteria</taxon>
        <taxon>Bacillati</taxon>
        <taxon>Bacillota</taxon>
        <taxon>Bacilli</taxon>
        <taxon>Bacillales</taxon>
        <taxon>Staphylococcaceae</taxon>
        <taxon>Staphylococcus</taxon>
    </lineage>
</organism>
<name>MSRB_STAES</name>
<keyword id="KW-0560">Oxidoreductase</keyword>
<comment type="catalytic activity">
    <reaction evidence="1">
        <text>L-methionyl-[protein] + [thioredoxin]-disulfide + H2O = L-methionyl-(R)-S-oxide-[protein] + [thioredoxin]-dithiol</text>
        <dbReference type="Rhea" id="RHEA:24164"/>
        <dbReference type="Rhea" id="RHEA-COMP:10698"/>
        <dbReference type="Rhea" id="RHEA-COMP:10700"/>
        <dbReference type="Rhea" id="RHEA-COMP:12313"/>
        <dbReference type="Rhea" id="RHEA-COMP:12314"/>
        <dbReference type="ChEBI" id="CHEBI:15377"/>
        <dbReference type="ChEBI" id="CHEBI:16044"/>
        <dbReference type="ChEBI" id="CHEBI:29950"/>
        <dbReference type="ChEBI" id="CHEBI:45764"/>
        <dbReference type="ChEBI" id="CHEBI:50058"/>
        <dbReference type="EC" id="1.8.4.12"/>
    </reaction>
</comment>
<comment type="similarity">
    <text evidence="1">Belongs to the MsrB Met sulfoxide reductase family.</text>
</comment>
<sequence>MIKKNKEELNDMEYLVTQENGTEPPFQNEYWNHFEKGIYVDKLSGKPLFTSEDKFESNCGWPSFSKALNDDEIVELVDKSFGMIRTEVRSEKANSHLGHVFNDGPKEKGGLRYCINSAAIQFIPYDKLEELGYGDLIKHFKK</sequence>